<dbReference type="EMBL" id="CP001138">
    <property type="protein sequence ID" value="ACH50169.1"/>
    <property type="molecule type" value="Genomic_DNA"/>
</dbReference>
<dbReference type="RefSeq" id="WP_000510912.1">
    <property type="nucleotide sequence ID" value="NC_011149.1"/>
</dbReference>
<dbReference type="SMR" id="B5F7M4"/>
<dbReference type="KEGG" id="sea:SeAg_B3555"/>
<dbReference type="HOGENOM" id="CLU_027647_0_0_6"/>
<dbReference type="Proteomes" id="UP000008819">
    <property type="component" value="Chromosome"/>
</dbReference>
<dbReference type="GO" id="GO:0005886">
    <property type="term" value="C:plasma membrane"/>
    <property type="evidence" value="ECO:0007669"/>
    <property type="project" value="UniProtKB-SubCell"/>
</dbReference>
<dbReference type="GO" id="GO:0022857">
    <property type="term" value="F:transmembrane transporter activity"/>
    <property type="evidence" value="ECO:0007669"/>
    <property type="project" value="UniProtKB-UniRule"/>
</dbReference>
<dbReference type="GO" id="GO:0046942">
    <property type="term" value="P:carboxylic acid transport"/>
    <property type="evidence" value="ECO:0007669"/>
    <property type="project" value="InterPro"/>
</dbReference>
<dbReference type="HAMAP" id="MF_01545">
    <property type="entry name" value="AaeB"/>
    <property type="match status" value="1"/>
</dbReference>
<dbReference type="InterPro" id="IPR006726">
    <property type="entry name" value="PHBA_efflux_AaeB/fusaric-R"/>
</dbReference>
<dbReference type="InterPro" id="IPR023706">
    <property type="entry name" value="PHBA_efflux_pump_AaeB"/>
</dbReference>
<dbReference type="NCBIfam" id="NF007916">
    <property type="entry name" value="PRK10631.1"/>
    <property type="match status" value="1"/>
</dbReference>
<dbReference type="PANTHER" id="PTHR30509:SF9">
    <property type="entry name" value="MULTIDRUG RESISTANCE PROTEIN MDTO"/>
    <property type="match status" value="1"/>
</dbReference>
<dbReference type="PANTHER" id="PTHR30509">
    <property type="entry name" value="P-HYDROXYBENZOIC ACID EFFLUX PUMP SUBUNIT-RELATED"/>
    <property type="match status" value="1"/>
</dbReference>
<dbReference type="Pfam" id="PF04632">
    <property type="entry name" value="FUSC"/>
    <property type="match status" value="1"/>
</dbReference>
<protein>
    <recommendedName>
        <fullName evidence="1">p-hydroxybenzoic acid efflux pump subunit AaeB</fullName>
        <shortName evidence="1">pHBA efflux pump protein B</shortName>
    </recommendedName>
</protein>
<gene>
    <name evidence="1" type="primary">aaeB</name>
    <name type="ordered locus">SeAg_B3555</name>
</gene>
<name>AAEB_SALA4</name>
<keyword id="KW-0997">Cell inner membrane</keyword>
<keyword id="KW-1003">Cell membrane</keyword>
<keyword id="KW-0472">Membrane</keyword>
<keyword id="KW-0812">Transmembrane</keyword>
<keyword id="KW-1133">Transmembrane helix</keyword>
<keyword id="KW-0813">Transport</keyword>
<accession>B5F7M4</accession>
<feature type="chain" id="PRO_1000146740" description="p-hydroxybenzoic acid efflux pump subunit AaeB">
    <location>
        <begin position="1"/>
        <end position="655"/>
    </location>
</feature>
<feature type="transmembrane region" description="Helical" evidence="1">
    <location>
        <begin position="13"/>
        <end position="33"/>
    </location>
</feature>
<feature type="transmembrane region" description="Helical" evidence="1">
    <location>
        <begin position="38"/>
        <end position="58"/>
    </location>
</feature>
<feature type="transmembrane region" description="Helical" evidence="1">
    <location>
        <begin position="69"/>
        <end position="89"/>
    </location>
</feature>
<feature type="transmembrane region" description="Helical" evidence="1">
    <location>
        <begin position="93"/>
        <end position="113"/>
    </location>
</feature>
<feature type="transmembrane region" description="Helical" evidence="1">
    <location>
        <begin position="121"/>
        <end position="141"/>
    </location>
</feature>
<feature type="transmembrane region" description="Helical" evidence="1">
    <location>
        <begin position="152"/>
        <end position="172"/>
    </location>
</feature>
<feature type="transmembrane region" description="Helical" evidence="1">
    <location>
        <begin position="370"/>
        <end position="390"/>
    </location>
</feature>
<feature type="transmembrane region" description="Helical" evidence="1">
    <location>
        <begin position="407"/>
        <end position="427"/>
    </location>
</feature>
<feature type="transmembrane region" description="Helical" evidence="1">
    <location>
        <begin position="431"/>
        <end position="451"/>
    </location>
</feature>
<feature type="transmembrane region" description="Helical" evidence="1">
    <location>
        <begin position="459"/>
        <end position="479"/>
    </location>
</feature>
<feature type="transmembrane region" description="Helical" evidence="1">
    <location>
        <begin position="482"/>
        <end position="502"/>
    </location>
</feature>
<organism>
    <name type="scientific">Salmonella agona (strain SL483)</name>
    <dbReference type="NCBI Taxonomy" id="454166"/>
    <lineage>
        <taxon>Bacteria</taxon>
        <taxon>Pseudomonadati</taxon>
        <taxon>Pseudomonadota</taxon>
        <taxon>Gammaproteobacteria</taxon>
        <taxon>Enterobacterales</taxon>
        <taxon>Enterobacteriaceae</taxon>
        <taxon>Salmonella</taxon>
    </lineage>
</organism>
<evidence type="ECO:0000255" key="1">
    <source>
        <dbReference type="HAMAP-Rule" id="MF_01545"/>
    </source>
</evidence>
<reference key="1">
    <citation type="journal article" date="2011" name="J. Bacteriol.">
        <title>Comparative genomics of 28 Salmonella enterica isolates: evidence for CRISPR-mediated adaptive sublineage evolution.</title>
        <authorList>
            <person name="Fricke W.F."/>
            <person name="Mammel M.K."/>
            <person name="McDermott P.F."/>
            <person name="Tartera C."/>
            <person name="White D.G."/>
            <person name="Leclerc J.E."/>
            <person name="Ravel J."/>
            <person name="Cebula T.A."/>
        </authorList>
    </citation>
    <scope>NUCLEOTIDE SEQUENCE [LARGE SCALE GENOMIC DNA]</scope>
    <source>
        <strain>SL483</strain>
    </source>
</reference>
<proteinExistence type="inferred from homology"/>
<comment type="function">
    <text evidence="1">Forms an efflux pump with AaeA. Could function as a metabolic relief valve, allowing to eliminate certain compounds when they accumulate to high levels in the cell.</text>
</comment>
<comment type="subcellular location">
    <subcellularLocation>
        <location evidence="1">Cell inner membrane</location>
        <topology evidence="1">Multi-pass membrane protein</topology>
    </subcellularLocation>
</comment>
<comment type="similarity">
    <text evidence="1">Belongs to the aromatic acid exporter ArAE (TC 2.A.85) family.</text>
</comment>
<sequence>MGIFSIANQHIRFAVKLACAIVLALFIGFHFQLETPRWAVLTAAIVAAGPAFAAGGEPYSGAIRYRGMLRIIGTFIGCIAALIIIISMIRAPLLMILVCCVWAGFCTWISSLVRIENSYAWGLSGYTALIIVITIQTEPLLTPQFALERCSEIVIGIGCAILADLLFSPRSIKQEVDRELDSLLVAQYQLMQLCIKHGDSEEVDNAWGDLVRRTAALEGMRSNLNMESSRWVRANRRLKALNTLSLTLITQSCETYLIQNTRPELITDTFRELFETPVETVQDVHRQLKRMRRVIVWTGERETPVTLYSWVGAATRYLLLKRGVISNTKISATEEEILQGEPVVKVESAERHHAMVNFWRTTLSCILGTLFWLWTGWTSGNGAMVMIAVVTSLAMRLPNPRMVCIDFIYGTLAALPLGLLYFLVIIPNTQQSMLLLCLSLAVLGFFIGIEVQKRRLGSMGALASTINIIVLDNPMTFHFSQFLDSALGQIVGCMLAFIVILLVRDKSKDRTGRVLLNQFVSAAVSAMTTNVVRRKENRLPALYQQLFLLMNKFPGDLPKFRLALTMIIAHQRLRDAPIPVNEDLSVFHRQLRRTADHVISAGSDDKRRRYFGLLLDELDIYQEKLRIWEAPPQVTEPVKRLTGMLHKYQNALTDS</sequence>